<dbReference type="EMBL" id="BX842647">
    <property type="protein sequence ID" value="CAE78490.1"/>
    <property type="molecule type" value="Genomic_DNA"/>
</dbReference>
<dbReference type="RefSeq" id="WP_011163092.1">
    <property type="nucleotide sequence ID" value="NC_005363.1"/>
</dbReference>
<dbReference type="SMR" id="P62212"/>
<dbReference type="STRING" id="264462.Bd0512"/>
<dbReference type="GeneID" id="93011620"/>
<dbReference type="KEGG" id="bba:Bd0512"/>
<dbReference type="eggNOG" id="COG0468">
    <property type="taxonomic scope" value="Bacteria"/>
</dbReference>
<dbReference type="HOGENOM" id="CLU_040469_3_2_7"/>
<dbReference type="Proteomes" id="UP000008080">
    <property type="component" value="Chromosome"/>
</dbReference>
<dbReference type="GO" id="GO:0005829">
    <property type="term" value="C:cytosol"/>
    <property type="evidence" value="ECO:0007669"/>
    <property type="project" value="TreeGrafter"/>
</dbReference>
<dbReference type="GO" id="GO:0005524">
    <property type="term" value="F:ATP binding"/>
    <property type="evidence" value="ECO:0007669"/>
    <property type="project" value="UniProtKB-UniRule"/>
</dbReference>
<dbReference type="GO" id="GO:0016887">
    <property type="term" value="F:ATP hydrolysis activity"/>
    <property type="evidence" value="ECO:0007669"/>
    <property type="project" value="InterPro"/>
</dbReference>
<dbReference type="GO" id="GO:0140664">
    <property type="term" value="F:ATP-dependent DNA damage sensor activity"/>
    <property type="evidence" value="ECO:0007669"/>
    <property type="project" value="InterPro"/>
</dbReference>
<dbReference type="GO" id="GO:0003684">
    <property type="term" value="F:damaged DNA binding"/>
    <property type="evidence" value="ECO:0007669"/>
    <property type="project" value="UniProtKB-UniRule"/>
</dbReference>
<dbReference type="GO" id="GO:0003697">
    <property type="term" value="F:single-stranded DNA binding"/>
    <property type="evidence" value="ECO:0007669"/>
    <property type="project" value="UniProtKB-UniRule"/>
</dbReference>
<dbReference type="GO" id="GO:0006310">
    <property type="term" value="P:DNA recombination"/>
    <property type="evidence" value="ECO:0007669"/>
    <property type="project" value="UniProtKB-UniRule"/>
</dbReference>
<dbReference type="GO" id="GO:0006281">
    <property type="term" value="P:DNA repair"/>
    <property type="evidence" value="ECO:0007669"/>
    <property type="project" value="UniProtKB-UniRule"/>
</dbReference>
<dbReference type="GO" id="GO:0009432">
    <property type="term" value="P:SOS response"/>
    <property type="evidence" value="ECO:0007669"/>
    <property type="project" value="UniProtKB-UniRule"/>
</dbReference>
<dbReference type="CDD" id="cd00983">
    <property type="entry name" value="RecA"/>
    <property type="match status" value="1"/>
</dbReference>
<dbReference type="FunFam" id="3.40.50.300:FF:000087">
    <property type="entry name" value="Recombinase RecA"/>
    <property type="match status" value="1"/>
</dbReference>
<dbReference type="Gene3D" id="3.40.50.300">
    <property type="entry name" value="P-loop containing nucleotide triphosphate hydrolases"/>
    <property type="match status" value="1"/>
</dbReference>
<dbReference type="HAMAP" id="MF_00268">
    <property type="entry name" value="RecA"/>
    <property type="match status" value="1"/>
</dbReference>
<dbReference type="InterPro" id="IPR003593">
    <property type="entry name" value="AAA+_ATPase"/>
</dbReference>
<dbReference type="InterPro" id="IPR013765">
    <property type="entry name" value="DNA_recomb/repair_RecA"/>
</dbReference>
<dbReference type="InterPro" id="IPR020584">
    <property type="entry name" value="DNA_recomb/repair_RecA_CS"/>
</dbReference>
<dbReference type="InterPro" id="IPR027417">
    <property type="entry name" value="P-loop_NTPase"/>
</dbReference>
<dbReference type="InterPro" id="IPR049261">
    <property type="entry name" value="RecA-like_C"/>
</dbReference>
<dbReference type="InterPro" id="IPR049428">
    <property type="entry name" value="RecA-like_N"/>
</dbReference>
<dbReference type="InterPro" id="IPR020588">
    <property type="entry name" value="RecA_ATP-bd"/>
</dbReference>
<dbReference type="InterPro" id="IPR023400">
    <property type="entry name" value="RecA_C_sf"/>
</dbReference>
<dbReference type="InterPro" id="IPR020587">
    <property type="entry name" value="RecA_monomer-monomer_interface"/>
</dbReference>
<dbReference type="NCBIfam" id="TIGR02012">
    <property type="entry name" value="tigrfam_recA"/>
    <property type="match status" value="1"/>
</dbReference>
<dbReference type="PANTHER" id="PTHR45900:SF1">
    <property type="entry name" value="MITOCHONDRIAL DNA REPAIR PROTEIN RECA HOMOLOG-RELATED"/>
    <property type="match status" value="1"/>
</dbReference>
<dbReference type="PANTHER" id="PTHR45900">
    <property type="entry name" value="RECA"/>
    <property type="match status" value="1"/>
</dbReference>
<dbReference type="Pfam" id="PF00154">
    <property type="entry name" value="RecA"/>
    <property type="match status" value="1"/>
</dbReference>
<dbReference type="Pfam" id="PF21096">
    <property type="entry name" value="RecA_C"/>
    <property type="match status" value="1"/>
</dbReference>
<dbReference type="PRINTS" id="PR00142">
    <property type="entry name" value="RECA"/>
</dbReference>
<dbReference type="SMART" id="SM00382">
    <property type="entry name" value="AAA"/>
    <property type="match status" value="1"/>
</dbReference>
<dbReference type="SUPFAM" id="SSF52540">
    <property type="entry name" value="P-loop containing nucleoside triphosphate hydrolases"/>
    <property type="match status" value="1"/>
</dbReference>
<dbReference type="SUPFAM" id="SSF54752">
    <property type="entry name" value="RecA protein, C-terminal domain"/>
    <property type="match status" value="1"/>
</dbReference>
<dbReference type="PROSITE" id="PS00321">
    <property type="entry name" value="RECA_1"/>
    <property type="match status" value="1"/>
</dbReference>
<dbReference type="PROSITE" id="PS50162">
    <property type="entry name" value="RECA_2"/>
    <property type="match status" value="1"/>
</dbReference>
<dbReference type="PROSITE" id="PS50163">
    <property type="entry name" value="RECA_3"/>
    <property type="match status" value="1"/>
</dbReference>
<name>RECA_BDEBA</name>
<protein>
    <recommendedName>
        <fullName evidence="1">Protein RecA</fullName>
    </recommendedName>
    <alternativeName>
        <fullName evidence="1">Recombinase A</fullName>
    </alternativeName>
</protein>
<organism>
    <name type="scientific">Bdellovibrio bacteriovorus (strain ATCC 15356 / DSM 50701 / NCIMB 9529 / HD100)</name>
    <dbReference type="NCBI Taxonomy" id="264462"/>
    <lineage>
        <taxon>Bacteria</taxon>
        <taxon>Pseudomonadati</taxon>
        <taxon>Bdellovibrionota</taxon>
        <taxon>Bdellovibrionia</taxon>
        <taxon>Bdellovibrionales</taxon>
        <taxon>Pseudobdellovibrionaceae</taxon>
        <taxon>Bdellovibrio</taxon>
    </lineage>
</organism>
<proteinExistence type="inferred from homology"/>
<feature type="chain" id="PRO_0000122660" description="Protein RecA">
    <location>
        <begin position="1"/>
        <end position="377"/>
    </location>
</feature>
<feature type="region of interest" description="Disordered" evidence="2">
    <location>
        <begin position="346"/>
        <end position="377"/>
    </location>
</feature>
<feature type="binding site" evidence="1">
    <location>
        <begin position="76"/>
        <end position="83"/>
    </location>
    <ligand>
        <name>ATP</name>
        <dbReference type="ChEBI" id="CHEBI:30616"/>
    </ligand>
</feature>
<keyword id="KW-0067">ATP-binding</keyword>
<keyword id="KW-0963">Cytoplasm</keyword>
<keyword id="KW-0227">DNA damage</keyword>
<keyword id="KW-0233">DNA recombination</keyword>
<keyword id="KW-0234">DNA repair</keyword>
<keyword id="KW-0238">DNA-binding</keyword>
<keyword id="KW-0547">Nucleotide-binding</keyword>
<keyword id="KW-1185">Reference proteome</keyword>
<keyword id="KW-0742">SOS response</keyword>
<reference key="1">
    <citation type="journal article" date="2004" name="Science">
        <title>A predator unmasked: life cycle of Bdellovibrio bacteriovorus from a genomic perspective.</title>
        <authorList>
            <person name="Rendulic S."/>
            <person name="Jagtap P."/>
            <person name="Rosinus A."/>
            <person name="Eppinger M."/>
            <person name="Baar C."/>
            <person name="Lanz C."/>
            <person name="Keller H."/>
            <person name="Lambert C."/>
            <person name="Evans K.J."/>
            <person name="Goesmann A."/>
            <person name="Meyer F."/>
            <person name="Sockett R.E."/>
            <person name="Schuster S.C."/>
        </authorList>
    </citation>
    <scope>NUCLEOTIDE SEQUENCE [LARGE SCALE GENOMIC DNA]</scope>
    <source>
        <strain>ATCC 15356 / DSM 50701 / NCIMB 9529 / HD100</strain>
    </source>
</reference>
<sequence length="377" mass="40288">MANATVDNKANSEKIKALELAVSTIEKQFGKGSIMRLGANESLVKDVEAISTGALSLDIALGIGGLPKGRICEIYGPESSGKTTLCLSVIAQAQKKGGVVAFVDAEHALDINYARKLGVNTEDLLISQPDTGEQALEITETLVRSGAIDVLVVDSVAALVPRAEIEGDMGDSHVGLQARLMSQALRKLTAAINRSNTLVIFINQIRMKIGVMFGNPETTTGGNALKFYSSVRLDVRRVGAIKNGEDVTGNRTAVKVVKNKMAPPFTKVEFDLMYGEGISEEGDLLDLAVTANMVEKSGAWFSINGERMGQGRDAAKNFLKEHPEYMVELRKKILAANGIGKLLVDTNGNNGEDHEGTEPVEIEAEDAAPKKGKKGKH</sequence>
<comment type="function">
    <text evidence="1">Can catalyze the hydrolysis of ATP in the presence of single-stranded DNA, the ATP-dependent uptake of single-stranded DNA by duplex DNA, and the ATP-dependent hybridization of homologous single-stranded DNAs. It interacts with LexA causing its activation and leading to its autocatalytic cleavage.</text>
</comment>
<comment type="subcellular location">
    <subcellularLocation>
        <location evidence="1">Cytoplasm</location>
    </subcellularLocation>
</comment>
<comment type="similarity">
    <text evidence="1">Belongs to the RecA family.</text>
</comment>
<accession>P62212</accession>
<gene>
    <name evidence="1" type="primary">recA</name>
    <name type="ordered locus">Bd0512</name>
</gene>
<evidence type="ECO:0000255" key="1">
    <source>
        <dbReference type="HAMAP-Rule" id="MF_00268"/>
    </source>
</evidence>
<evidence type="ECO:0000256" key="2">
    <source>
        <dbReference type="SAM" id="MobiDB-lite"/>
    </source>
</evidence>